<name>CFP32_MYCBO</name>
<reference key="1">
    <citation type="journal article" date="2003" name="Proc. Natl. Acad. Sci. U.S.A.">
        <title>The complete genome sequence of Mycobacterium bovis.</title>
        <authorList>
            <person name="Garnier T."/>
            <person name="Eiglmeier K."/>
            <person name="Camus J.-C."/>
            <person name="Medina N."/>
            <person name="Mansoor H."/>
            <person name="Pryor M."/>
            <person name="Duthoy S."/>
            <person name="Grondin S."/>
            <person name="Lacroix C."/>
            <person name="Monsempe C."/>
            <person name="Simon S."/>
            <person name="Harris B."/>
            <person name="Atkin R."/>
            <person name="Doggett J."/>
            <person name="Mayes R."/>
            <person name="Keating L."/>
            <person name="Wheeler P.R."/>
            <person name="Parkhill J."/>
            <person name="Barrell B.G."/>
            <person name="Cole S.T."/>
            <person name="Gordon S.V."/>
            <person name="Hewinson R.G."/>
        </authorList>
    </citation>
    <scope>NUCLEOTIDE SEQUENCE [LARGE SCALE GENOMIC DNA]</scope>
    <source>
        <strain>ATCC BAA-935 / AF2122/97</strain>
    </source>
</reference>
<reference key="2">
    <citation type="journal article" date="2017" name="Genome Announc.">
        <title>Updated reference genome sequence and annotation of Mycobacterium bovis AF2122/97.</title>
        <authorList>
            <person name="Malone K.M."/>
            <person name="Farrell D."/>
            <person name="Stuber T.P."/>
            <person name="Schubert O.T."/>
            <person name="Aebersold R."/>
            <person name="Robbe-Austerman S."/>
            <person name="Gordon S.V."/>
        </authorList>
    </citation>
    <scope>NUCLEOTIDE SEQUENCE [LARGE SCALE GENOMIC DNA]</scope>
    <scope>GENOME REANNOTATION</scope>
    <source>
        <strain>ATCC BAA-935 / AF2122/97</strain>
    </source>
</reference>
<sequence>MPKRSEYRQGTPNWVDLQTTDQSAAKKFYTSLFGWGYDDNPVPGGGGVYSMATLNGEAVAAIAPMPPGAPEGMPPIWNTYIAVDDVDAVVDKVVPGGGQVMMPAFDIGDAGRMSFITDPTGAAVGLWQANRHIGATLVNETGTLIWNELLTDKPDLALAFYEAVVGLTHSSMEIAAGQNYRVLKAGDAEVGGCMEPPMPGVPNHWHVYFAVDDADATAAKAAAAGGQVIAEPADIPSVGRFAVLSDPQGAIFSVLKPAPQQ</sequence>
<evidence type="ECO:0000250" key="1">
    <source>
        <dbReference type="UniProtKB" id="P9WIR3"/>
    </source>
</evidence>
<evidence type="ECO:0000255" key="2">
    <source>
        <dbReference type="PROSITE-ProRule" id="PRU01163"/>
    </source>
</evidence>
<evidence type="ECO:0000305" key="3"/>
<proteinExistence type="predicted"/>
<dbReference type="EMBL" id="LT708304">
    <property type="protein sequence ID" value="SIT99189.1"/>
    <property type="molecule type" value="Genomic_DNA"/>
</dbReference>
<dbReference type="RefSeq" id="NP_854252.1">
    <property type="nucleotide sequence ID" value="NC_002945.3"/>
</dbReference>
<dbReference type="RefSeq" id="WP_003403012.1">
    <property type="nucleotide sequence ID" value="NC_002945.4"/>
</dbReference>
<dbReference type="BMRB" id="P0A5N9"/>
<dbReference type="SMR" id="P0A5N9"/>
<dbReference type="PATRIC" id="fig|233413.5.peg.644"/>
<dbReference type="Proteomes" id="UP000001419">
    <property type="component" value="Chromosome"/>
</dbReference>
<dbReference type="CDD" id="cd07247">
    <property type="entry name" value="SgaA_N_like"/>
    <property type="match status" value="2"/>
</dbReference>
<dbReference type="FunFam" id="3.10.180.10:FF:000043">
    <property type="entry name" value="27 kDa antigen Cfp30B"/>
    <property type="match status" value="1"/>
</dbReference>
<dbReference type="Gene3D" id="3.10.180.10">
    <property type="entry name" value="2,3-Dihydroxybiphenyl 1,2-Dioxygenase, domain 1"/>
    <property type="match status" value="2"/>
</dbReference>
<dbReference type="InterPro" id="IPR052164">
    <property type="entry name" value="Anthracycline_SecMetBiosynth"/>
</dbReference>
<dbReference type="InterPro" id="IPR029068">
    <property type="entry name" value="Glyas_Bleomycin-R_OHBP_Dase"/>
</dbReference>
<dbReference type="InterPro" id="IPR004360">
    <property type="entry name" value="Glyas_Fos-R_dOase_dom"/>
</dbReference>
<dbReference type="InterPro" id="IPR037523">
    <property type="entry name" value="VOC"/>
</dbReference>
<dbReference type="PANTHER" id="PTHR33993:SF14">
    <property type="entry name" value="GB|AAF24581.1"/>
    <property type="match status" value="1"/>
</dbReference>
<dbReference type="PANTHER" id="PTHR33993">
    <property type="entry name" value="GLYOXALASE-RELATED"/>
    <property type="match status" value="1"/>
</dbReference>
<dbReference type="Pfam" id="PF00903">
    <property type="entry name" value="Glyoxalase"/>
    <property type="match status" value="2"/>
</dbReference>
<dbReference type="SUPFAM" id="SSF54593">
    <property type="entry name" value="Glyoxalase/Bleomycin resistance protein/Dihydroxybiphenyl dioxygenase"/>
    <property type="match status" value="2"/>
</dbReference>
<dbReference type="PROSITE" id="PS51819">
    <property type="entry name" value="VOC"/>
    <property type="match status" value="2"/>
</dbReference>
<gene>
    <name evidence="1" type="primary">cfp32</name>
    <name type="synonym">cfp30B</name>
    <name type="synonym">TB27.3</name>
    <name type="ordered locus">BQ2027_MB0592</name>
</gene>
<keyword id="KW-1185">Reference proteome</keyword>
<keyword id="KW-0677">Repeat</keyword>
<protein>
    <recommendedName>
        <fullName evidence="3">Putative glyoxylase CFP32</fullName>
    </recommendedName>
    <alternativeName>
        <fullName evidence="3">27 kDa antigen Cfp30B</fullName>
    </alternativeName>
</protein>
<feature type="chain" id="PRO_0000089564" description="Putative glyoxylase CFP32">
    <location>
        <begin position="1"/>
        <end position="261"/>
    </location>
</feature>
<feature type="domain" description="VOC 1" evidence="2">
    <location>
        <begin position="11"/>
        <end position="129"/>
    </location>
</feature>
<feature type="domain" description="VOC 2" evidence="2">
    <location>
        <begin position="143"/>
        <end position="257"/>
    </location>
</feature>
<feature type="region of interest" description="Glyoxalase 1" evidence="3">
    <location>
        <begin position="13"/>
        <end position="123"/>
    </location>
</feature>
<feature type="region of interest" description="Glyoxalase 2" evidence="3">
    <location>
        <begin position="149"/>
        <end position="252"/>
    </location>
</feature>
<organism>
    <name type="scientific">Mycobacterium bovis (strain ATCC BAA-935 / AF2122/97)</name>
    <dbReference type="NCBI Taxonomy" id="233413"/>
    <lineage>
        <taxon>Bacteria</taxon>
        <taxon>Bacillati</taxon>
        <taxon>Actinomycetota</taxon>
        <taxon>Actinomycetes</taxon>
        <taxon>Mycobacteriales</taxon>
        <taxon>Mycobacteriaceae</taxon>
        <taxon>Mycobacterium</taxon>
        <taxon>Mycobacterium tuberculosis complex</taxon>
    </lineage>
</organism>
<accession>P0A5N9</accession>
<accession>A0A1R3XVS1</accession>
<accession>O53774</accession>
<accession>X2BFF7</accession>